<accession>Q58275</accession>
<organism>
    <name type="scientific">Methanocaldococcus jannaschii (strain ATCC 43067 / DSM 2661 / JAL-1 / JCM 10045 / NBRC 100440)</name>
    <name type="common">Methanococcus jannaschii</name>
    <dbReference type="NCBI Taxonomy" id="243232"/>
    <lineage>
        <taxon>Archaea</taxon>
        <taxon>Methanobacteriati</taxon>
        <taxon>Methanobacteriota</taxon>
        <taxon>Methanomada group</taxon>
        <taxon>Methanococci</taxon>
        <taxon>Methanococcales</taxon>
        <taxon>Methanocaldococcaceae</taxon>
        <taxon>Methanocaldococcus</taxon>
    </lineage>
</organism>
<sequence length="449" mass="50957">MNKIKEGANVRITIYSPEVYTYGAMLIGGILKHKGYNVHLVRKIDKTLFLKSDVIIFSLYSTLHILDKNIREAIDFIKKVRKNKTKVYVAGCVSTYPEIILNELNVDGVIVGEGEITTPKIIEGDKEGLAYKEGDEIVINYPKEKPDLNHPLPLIPKDIEQQSIRGANVYIETHRGCLGNCTFCQVPKFFGKTIRSRDVEDVVEEVKAFKRAGAKRIAISGGTGSLYAFKKSINRDKFFELLEKVSEVIGKNNLSVPDMRVDYVDEEILEAIKNYTIGWVFYGIESGSDKILKDMKKGTNREKNLDAIKLAKDCGVKVAGSFIVAYPTETEMDYLLTKDFIVDAELDDVFVSIAEPIPTTELCDLVLSMPKEENLLYKMHEGEYRKLGLSEAEARCFDLLIHAEMWKSMPKPLTPQLYNLYLNEARIQGKDIRAITDLLFKYRDLLLKK</sequence>
<keyword id="KW-0004">4Fe-4S</keyword>
<keyword id="KW-0408">Iron</keyword>
<keyword id="KW-0411">Iron-sulfur</keyword>
<keyword id="KW-0479">Metal-binding</keyword>
<keyword id="KW-1185">Reference proteome</keyword>
<keyword id="KW-0949">S-adenosyl-L-methionine</keyword>
<keyword id="KW-0808">Transferase</keyword>
<protein>
    <recommendedName>
        <fullName>Putative methylthiotransferase MJ0865</fullName>
        <ecNumber>2.-.-.-</ecNumber>
    </recommendedName>
</protein>
<proteinExistence type="inferred from homology"/>
<gene>
    <name type="ordered locus">MJ0865</name>
</gene>
<evidence type="ECO:0000250" key="1"/>
<evidence type="ECO:0000255" key="2">
    <source>
        <dbReference type="PROSITE-ProRule" id="PRU00780"/>
    </source>
</evidence>
<evidence type="ECO:0000255" key="3">
    <source>
        <dbReference type="PROSITE-ProRule" id="PRU01266"/>
    </source>
</evidence>
<evidence type="ECO:0000305" key="4"/>
<reference key="1">
    <citation type="journal article" date="1996" name="Science">
        <title>Complete genome sequence of the methanogenic archaeon, Methanococcus jannaschii.</title>
        <authorList>
            <person name="Bult C.J."/>
            <person name="White O."/>
            <person name="Olsen G.J."/>
            <person name="Zhou L."/>
            <person name="Fleischmann R.D."/>
            <person name="Sutton G.G."/>
            <person name="Blake J.A."/>
            <person name="FitzGerald L.M."/>
            <person name="Clayton R.A."/>
            <person name="Gocayne J.D."/>
            <person name="Kerlavage A.R."/>
            <person name="Dougherty B.A."/>
            <person name="Tomb J.-F."/>
            <person name="Adams M.D."/>
            <person name="Reich C.I."/>
            <person name="Overbeek R."/>
            <person name="Kirkness E.F."/>
            <person name="Weinstock K.G."/>
            <person name="Merrick J.M."/>
            <person name="Glodek A."/>
            <person name="Scott J.L."/>
            <person name="Geoghagen N.S.M."/>
            <person name="Weidman J.F."/>
            <person name="Fuhrmann J.L."/>
            <person name="Nguyen D."/>
            <person name="Utterback T.R."/>
            <person name="Kelley J.M."/>
            <person name="Peterson J.D."/>
            <person name="Sadow P.W."/>
            <person name="Hanna M.C."/>
            <person name="Cotton M.D."/>
            <person name="Roberts K.M."/>
            <person name="Hurst M.A."/>
            <person name="Kaine B.P."/>
            <person name="Borodovsky M."/>
            <person name="Klenk H.-P."/>
            <person name="Fraser C.M."/>
            <person name="Smith H.O."/>
            <person name="Woese C.R."/>
            <person name="Venter J.C."/>
        </authorList>
    </citation>
    <scope>NUCLEOTIDE SEQUENCE [LARGE SCALE GENOMIC DNA]</scope>
    <source>
        <strain>ATCC 43067 / DSM 2661 / JAL-1 / JCM 10045 / NBRC 100440</strain>
    </source>
</reference>
<dbReference type="EC" id="2.-.-.-"/>
<dbReference type="EMBL" id="L77117">
    <property type="protein sequence ID" value="AAB98870.1"/>
    <property type="molecule type" value="Genomic_DNA"/>
</dbReference>
<dbReference type="PIR" id="A64408">
    <property type="entry name" value="A64408"/>
</dbReference>
<dbReference type="SMR" id="Q58275"/>
<dbReference type="STRING" id="243232.MJ_0865"/>
<dbReference type="PaxDb" id="243232-MJ_0865"/>
<dbReference type="EnsemblBacteria" id="AAB98870">
    <property type="protein sequence ID" value="AAB98870"/>
    <property type="gene ID" value="MJ_0865"/>
</dbReference>
<dbReference type="KEGG" id="mja:MJ_0865"/>
<dbReference type="eggNOG" id="arCOG01356">
    <property type="taxonomic scope" value="Archaea"/>
</dbReference>
<dbReference type="HOGENOM" id="CLU_600805_0_0_2"/>
<dbReference type="InParanoid" id="Q58275"/>
<dbReference type="PhylomeDB" id="Q58275"/>
<dbReference type="Proteomes" id="UP000000805">
    <property type="component" value="Chromosome"/>
</dbReference>
<dbReference type="GO" id="GO:0051539">
    <property type="term" value="F:4 iron, 4 sulfur cluster binding"/>
    <property type="evidence" value="ECO:0007669"/>
    <property type="project" value="UniProtKB-KW"/>
</dbReference>
<dbReference type="GO" id="GO:0046872">
    <property type="term" value="F:metal ion binding"/>
    <property type="evidence" value="ECO:0007669"/>
    <property type="project" value="UniProtKB-KW"/>
</dbReference>
<dbReference type="GO" id="GO:0016740">
    <property type="term" value="F:transferase activity"/>
    <property type="evidence" value="ECO:0007669"/>
    <property type="project" value="UniProtKB-KW"/>
</dbReference>
<dbReference type="CDD" id="cd01335">
    <property type="entry name" value="Radical_SAM"/>
    <property type="match status" value="1"/>
</dbReference>
<dbReference type="CDD" id="cd02068">
    <property type="entry name" value="radical_SAM_B12_BD"/>
    <property type="match status" value="1"/>
</dbReference>
<dbReference type="Gene3D" id="3.40.50.280">
    <property type="entry name" value="Cobalamin-binding domain"/>
    <property type="match status" value="1"/>
</dbReference>
<dbReference type="Gene3D" id="3.80.30.20">
    <property type="entry name" value="tm_1862 like domain"/>
    <property type="match status" value="1"/>
</dbReference>
<dbReference type="InterPro" id="IPR023979">
    <property type="entry name" value="CHP04014_B12-bd/rSAM"/>
</dbReference>
<dbReference type="InterPro" id="IPR006638">
    <property type="entry name" value="Elp3/MiaA/NifB-like_rSAM"/>
</dbReference>
<dbReference type="InterPro" id="IPR020612">
    <property type="entry name" value="Methylthiotransferase_CS"/>
</dbReference>
<dbReference type="InterPro" id="IPR007197">
    <property type="entry name" value="rSAM"/>
</dbReference>
<dbReference type="InterPro" id="IPR023404">
    <property type="entry name" value="rSAM_horseshoe"/>
</dbReference>
<dbReference type="InterPro" id="IPR051198">
    <property type="entry name" value="Tetrapyrrole_Bchl_Biosynth_MTs"/>
</dbReference>
<dbReference type="NCBIfam" id="TIGR04014">
    <property type="entry name" value="B12_SAM_MJ_0865"/>
    <property type="match status" value="1"/>
</dbReference>
<dbReference type="PANTHER" id="PTHR43409">
    <property type="entry name" value="ANAEROBIC MAGNESIUM-PROTOPORPHYRIN IX MONOMETHYL ESTER CYCLASE-RELATED"/>
    <property type="match status" value="1"/>
</dbReference>
<dbReference type="PANTHER" id="PTHR43409:SF17">
    <property type="entry name" value="METHYLTHIOTRANSFERASE MJ0865-RELATED"/>
    <property type="match status" value="1"/>
</dbReference>
<dbReference type="Pfam" id="PF04055">
    <property type="entry name" value="Radical_SAM"/>
    <property type="match status" value="1"/>
</dbReference>
<dbReference type="SFLD" id="SFLDG01217">
    <property type="entry name" value="B12-binding_methylthiotransfer"/>
    <property type="match status" value="1"/>
</dbReference>
<dbReference type="SFLD" id="SFLDS00029">
    <property type="entry name" value="Radical_SAM"/>
    <property type="match status" value="1"/>
</dbReference>
<dbReference type="SMART" id="SM00729">
    <property type="entry name" value="Elp3"/>
    <property type="match status" value="1"/>
</dbReference>
<dbReference type="SUPFAM" id="SSF102114">
    <property type="entry name" value="Radical SAM enzymes"/>
    <property type="match status" value="1"/>
</dbReference>
<dbReference type="PROSITE" id="PS01278">
    <property type="entry name" value="MTTASE_RADICAL"/>
    <property type="match status" value="1"/>
</dbReference>
<dbReference type="PROSITE" id="PS51918">
    <property type="entry name" value="RADICAL_SAM"/>
    <property type="match status" value="1"/>
</dbReference>
<name>Y865_METJA</name>
<feature type="chain" id="PRO_0000141759" description="Putative methylthiotransferase MJ0865">
    <location>
        <begin position="1"/>
        <end position="449"/>
    </location>
</feature>
<feature type="domain" description="Radical SAM core" evidence="3">
    <location>
        <begin position="163"/>
        <end position="390"/>
    </location>
</feature>
<feature type="binding site" evidence="2">
    <location>
        <position position="177"/>
    </location>
    <ligand>
        <name>[4Fe-4S] cluster</name>
        <dbReference type="ChEBI" id="CHEBI:49883"/>
        <note>4Fe-4S-S-AdoMet</note>
    </ligand>
</feature>
<feature type="binding site" evidence="2">
    <location>
        <position position="181"/>
    </location>
    <ligand>
        <name>[4Fe-4S] cluster</name>
        <dbReference type="ChEBI" id="CHEBI:49883"/>
        <note>4Fe-4S-S-AdoMet</note>
    </ligand>
</feature>
<feature type="binding site" evidence="2">
    <location>
        <position position="184"/>
    </location>
    <ligand>
        <name>[4Fe-4S] cluster</name>
        <dbReference type="ChEBI" id="CHEBI:49883"/>
        <note>4Fe-4S-S-AdoMet</note>
    </ligand>
</feature>
<comment type="cofactor">
    <cofactor evidence="1">
        <name>[4Fe-4S] cluster</name>
        <dbReference type="ChEBI" id="CHEBI:49883"/>
    </cofactor>
    <text evidence="1">Binds 1 [4Fe-4S] cluster. The cluster is coordinated with 3 cysteines and an exchangeable S-adenosyl-L-methionine.</text>
</comment>
<comment type="similarity">
    <text evidence="4">Belongs to the methylthiotransferase family.</text>
</comment>